<reference key="1">
    <citation type="journal article" date="2000" name="Nature">
        <title>Sequence and analysis of chromosome 1 of the plant Arabidopsis thaliana.</title>
        <authorList>
            <person name="Theologis A."/>
            <person name="Ecker J.R."/>
            <person name="Palm C.J."/>
            <person name="Federspiel N.A."/>
            <person name="Kaul S."/>
            <person name="White O."/>
            <person name="Alonso J."/>
            <person name="Altafi H."/>
            <person name="Araujo R."/>
            <person name="Bowman C.L."/>
            <person name="Brooks S.Y."/>
            <person name="Buehler E."/>
            <person name="Chan A."/>
            <person name="Chao Q."/>
            <person name="Chen H."/>
            <person name="Cheuk R.F."/>
            <person name="Chin C.W."/>
            <person name="Chung M.K."/>
            <person name="Conn L."/>
            <person name="Conway A.B."/>
            <person name="Conway A.R."/>
            <person name="Creasy T.H."/>
            <person name="Dewar K."/>
            <person name="Dunn P."/>
            <person name="Etgu P."/>
            <person name="Feldblyum T.V."/>
            <person name="Feng J.-D."/>
            <person name="Fong B."/>
            <person name="Fujii C.Y."/>
            <person name="Gill J.E."/>
            <person name="Goldsmith A.D."/>
            <person name="Haas B."/>
            <person name="Hansen N.F."/>
            <person name="Hughes B."/>
            <person name="Huizar L."/>
            <person name="Hunter J.L."/>
            <person name="Jenkins J."/>
            <person name="Johnson-Hopson C."/>
            <person name="Khan S."/>
            <person name="Khaykin E."/>
            <person name="Kim C.J."/>
            <person name="Koo H.L."/>
            <person name="Kremenetskaia I."/>
            <person name="Kurtz D.B."/>
            <person name="Kwan A."/>
            <person name="Lam B."/>
            <person name="Langin-Hooper S."/>
            <person name="Lee A."/>
            <person name="Lee J.M."/>
            <person name="Lenz C.A."/>
            <person name="Li J.H."/>
            <person name="Li Y.-P."/>
            <person name="Lin X."/>
            <person name="Liu S.X."/>
            <person name="Liu Z.A."/>
            <person name="Luros J.S."/>
            <person name="Maiti R."/>
            <person name="Marziali A."/>
            <person name="Militscher J."/>
            <person name="Miranda M."/>
            <person name="Nguyen M."/>
            <person name="Nierman W.C."/>
            <person name="Osborne B.I."/>
            <person name="Pai G."/>
            <person name="Peterson J."/>
            <person name="Pham P.K."/>
            <person name="Rizzo M."/>
            <person name="Rooney T."/>
            <person name="Rowley D."/>
            <person name="Sakano H."/>
            <person name="Salzberg S.L."/>
            <person name="Schwartz J.R."/>
            <person name="Shinn P."/>
            <person name="Southwick A.M."/>
            <person name="Sun H."/>
            <person name="Tallon L.J."/>
            <person name="Tambunga G."/>
            <person name="Toriumi M.J."/>
            <person name="Town C.D."/>
            <person name="Utterback T."/>
            <person name="Van Aken S."/>
            <person name="Vaysberg M."/>
            <person name="Vysotskaia V.S."/>
            <person name="Walker M."/>
            <person name="Wu D."/>
            <person name="Yu G."/>
            <person name="Fraser C.M."/>
            <person name="Venter J.C."/>
            <person name="Davis R.W."/>
        </authorList>
    </citation>
    <scope>NUCLEOTIDE SEQUENCE [LARGE SCALE GENOMIC DNA]</scope>
    <source>
        <strain>cv. Columbia</strain>
    </source>
</reference>
<reference key="2">
    <citation type="journal article" date="2017" name="Plant J.">
        <title>Araport11: a complete reannotation of the Arabidopsis thaliana reference genome.</title>
        <authorList>
            <person name="Cheng C.Y."/>
            <person name="Krishnakumar V."/>
            <person name="Chan A.P."/>
            <person name="Thibaud-Nissen F."/>
            <person name="Schobel S."/>
            <person name="Town C.D."/>
        </authorList>
    </citation>
    <scope>GENOME REANNOTATION</scope>
    <source>
        <strain>cv. Columbia</strain>
    </source>
</reference>
<reference key="3">
    <citation type="submission" date="2002-03" db="EMBL/GenBank/DDBJ databases">
        <title>Full-length cDNA from Arabidopsis thaliana.</title>
        <authorList>
            <person name="Brover V.V."/>
            <person name="Troukhan M.E."/>
            <person name="Alexandrov N.A."/>
            <person name="Lu Y.-P."/>
            <person name="Flavell R.B."/>
            <person name="Feldmann K.A."/>
        </authorList>
    </citation>
    <scope>NUCLEOTIDE SEQUENCE [LARGE SCALE MRNA]</scope>
</reference>
<reference key="4">
    <citation type="journal article" date="2001" name="J. Biol. Chem.">
        <title>The Arabidopsis thaliana ABC protein superfamily, a complete inventory.</title>
        <authorList>
            <person name="Sanchez-Fernandez R."/>
            <person name="Davies T.G."/>
            <person name="Coleman J.O."/>
            <person name="Rea P.A."/>
        </authorList>
    </citation>
    <scope>GENE FAMILY</scope>
    <scope>NOMENCLATURE</scope>
</reference>
<reference key="5">
    <citation type="journal article" date="2004" name="Proc. Natl. Acad. Sci. U.S.A.">
        <title>AtNAP7 is a plastidic SufC-like ATP-binding cassette/ATPase essential for Arabidopsis embryogenesis.</title>
        <authorList>
            <person name="Xu X.M."/>
            <person name="Moeller S.G."/>
        </authorList>
    </citation>
    <scope>INTERACTION WITH NAP6</scope>
    <scope>SUBCELLULAR LOCATION</scope>
</reference>
<reference key="6">
    <citation type="journal article" date="2008" name="Trends Plant Sci.">
        <title>Plant ABC proteins - a unified nomenclature and updated inventory.</title>
        <authorList>
            <person name="Verrier P.J."/>
            <person name="Bird D."/>
            <person name="Burla B."/>
            <person name="Dassa E."/>
            <person name="Forestier C."/>
            <person name="Geisler M."/>
            <person name="Klein M."/>
            <person name="Kolukisaoglu H.U."/>
            <person name="Lee Y."/>
            <person name="Martinoia E."/>
            <person name="Murphy A."/>
            <person name="Rea P.A."/>
            <person name="Samuels L."/>
            <person name="Schulz B."/>
            <person name="Spalding E.J."/>
            <person name="Yazaki K."/>
            <person name="Theodoulou F.L."/>
        </authorList>
    </citation>
    <scope>GENE FAMILY</scope>
    <scope>NOMENCLATURE</scope>
</reference>
<dbReference type="EMBL" id="AC007767">
    <property type="protein sequence ID" value="AAF81348.1"/>
    <property type="molecule type" value="Genomic_DNA"/>
</dbReference>
<dbReference type="EMBL" id="CP002684">
    <property type="protein sequence ID" value="AEE31494.1"/>
    <property type="molecule type" value="Genomic_DNA"/>
</dbReference>
<dbReference type="EMBL" id="AY086585">
    <property type="protein sequence ID" value="AAM63647.1"/>
    <property type="molecule type" value="mRNA"/>
</dbReference>
<dbReference type="PIR" id="D86450">
    <property type="entry name" value="D86450"/>
</dbReference>
<dbReference type="RefSeq" id="NP_564404.1">
    <property type="nucleotide sequence ID" value="NM_102985.4"/>
</dbReference>
<dbReference type="SMR" id="Q9LQK7"/>
<dbReference type="FunCoup" id="Q9LQK7">
    <property type="interactions" value="1026"/>
</dbReference>
<dbReference type="IntAct" id="Q9LQK7">
    <property type="interactions" value="4"/>
</dbReference>
<dbReference type="STRING" id="3702.Q9LQK7"/>
<dbReference type="iPTMnet" id="Q9LQK7"/>
<dbReference type="PaxDb" id="3702-AT1G32500.1"/>
<dbReference type="ProteomicsDB" id="243301"/>
<dbReference type="EnsemblPlants" id="AT1G32500.1">
    <property type="protein sequence ID" value="AT1G32500.1"/>
    <property type="gene ID" value="AT1G32500"/>
</dbReference>
<dbReference type="GeneID" id="840144"/>
<dbReference type="Gramene" id="AT1G32500.1">
    <property type="protein sequence ID" value="AT1G32500.1"/>
    <property type="gene ID" value="AT1G32500"/>
</dbReference>
<dbReference type="KEGG" id="ath:AT1G32500"/>
<dbReference type="Araport" id="AT1G32500"/>
<dbReference type="TAIR" id="AT1G32500">
    <property type="gene designation" value="ABCI7"/>
</dbReference>
<dbReference type="eggNOG" id="ENOG502QSI1">
    <property type="taxonomic scope" value="Eukaryota"/>
</dbReference>
<dbReference type="HOGENOM" id="CLU_026231_5_4_1"/>
<dbReference type="InParanoid" id="Q9LQK7"/>
<dbReference type="OMA" id="YWTNSVM"/>
<dbReference type="PhylomeDB" id="Q9LQK7"/>
<dbReference type="PRO" id="PR:Q9LQK7"/>
<dbReference type="Proteomes" id="UP000006548">
    <property type="component" value="Chromosome 1"/>
</dbReference>
<dbReference type="ExpressionAtlas" id="Q9LQK7">
    <property type="expression patterns" value="baseline and differential"/>
</dbReference>
<dbReference type="GO" id="GO:0009507">
    <property type="term" value="C:chloroplast"/>
    <property type="evidence" value="ECO:0000314"/>
    <property type="project" value="TAIR"/>
</dbReference>
<dbReference type="GO" id="GO:0009570">
    <property type="term" value="C:chloroplast stroma"/>
    <property type="evidence" value="ECO:0007005"/>
    <property type="project" value="TAIR"/>
</dbReference>
<dbReference type="GO" id="GO:0009536">
    <property type="term" value="C:plastid"/>
    <property type="evidence" value="ECO:0000314"/>
    <property type="project" value="TAIR"/>
</dbReference>
<dbReference type="GO" id="GO:0009793">
    <property type="term" value="P:embryo development ending in seed dormancy"/>
    <property type="evidence" value="ECO:0000315"/>
    <property type="project" value="TAIR"/>
</dbReference>
<dbReference type="GO" id="GO:0016226">
    <property type="term" value="P:iron-sulfur cluster assembly"/>
    <property type="evidence" value="ECO:0000314"/>
    <property type="project" value="TAIR"/>
</dbReference>
<dbReference type="GO" id="GO:0010027">
    <property type="term" value="P:thylakoid membrane organization"/>
    <property type="evidence" value="ECO:0000315"/>
    <property type="project" value="TAIR"/>
</dbReference>
<dbReference type="InterPro" id="IPR055346">
    <property type="entry name" value="Fe-S_cluster_assembly_SufBD"/>
</dbReference>
<dbReference type="InterPro" id="IPR000825">
    <property type="entry name" value="SUF_FeS_clus_asmbl_SufBD_core"/>
</dbReference>
<dbReference type="InterPro" id="IPR037284">
    <property type="entry name" value="SUF_FeS_clus_asmbl_SufBD_sf"/>
</dbReference>
<dbReference type="InterPro" id="IPR011542">
    <property type="entry name" value="SUF_FeS_clus_asmbl_SufD"/>
</dbReference>
<dbReference type="InterPro" id="IPR045595">
    <property type="entry name" value="SufBD_N"/>
</dbReference>
<dbReference type="NCBIfam" id="TIGR01981">
    <property type="entry name" value="sufD"/>
    <property type="match status" value="1"/>
</dbReference>
<dbReference type="PANTHER" id="PTHR43575">
    <property type="entry name" value="PROTEIN ABCI7, CHLOROPLASTIC"/>
    <property type="match status" value="1"/>
</dbReference>
<dbReference type="PANTHER" id="PTHR43575:SF1">
    <property type="entry name" value="PROTEIN ABCI7, CHLOROPLASTIC"/>
    <property type="match status" value="1"/>
</dbReference>
<dbReference type="Pfam" id="PF01458">
    <property type="entry name" value="SUFBD_core"/>
    <property type="match status" value="1"/>
</dbReference>
<dbReference type="Pfam" id="PF19295">
    <property type="entry name" value="SufBD_N"/>
    <property type="match status" value="1"/>
</dbReference>
<dbReference type="SUPFAM" id="SSF101960">
    <property type="entry name" value="Stabilizer of iron transporter SufD"/>
    <property type="match status" value="1"/>
</dbReference>
<keyword id="KW-0150">Chloroplast</keyword>
<keyword id="KW-0934">Plastid</keyword>
<keyword id="KW-1185">Reference proteome</keyword>
<keyword id="KW-0809">Transit peptide</keyword>
<accession>Q9LQK7</accession>
<accession>Q8LCI4</accession>
<name>AB7I_ARATH</name>
<comment type="subunit">
    <text evidence="2">Interacts with NAP7.</text>
</comment>
<comment type="subcellular location">
    <subcellularLocation>
        <location evidence="2">Plastid</location>
        <location evidence="2">Chloroplast</location>
    </subcellularLocation>
</comment>
<comment type="caution">
    <text evidence="4">Was originally (PubMed:11346655) thought to belong to the ABC transporter family. Lacks the conserved ABC domain, which is one of the features of the ABC transporter family.</text>
</comment>
<organism>
    <name type="scientific">Arabidopsis thaliana</name>
    <name type="common">Mouse-ear cress</name>
    <dbReference type="NCBI Taxonomy" id="3702"/>
    <lineage>
        <taxon>Eukaryota</taxon>
        <taxon>Viridiplantae</taxon>
        <taxon>Streptophyta</taxon>
        <taxon>Embryophyta</taxon>
        <taxon>Tracheophyta</taxon>
        <taxon>Spermatophyta</taxon>
        <taxon>Magnoliopsida</taxon>
        <taxon>eudicotyledons</taxon>
        <taxon>Gunneridae</taxon>
        <taxon>Pentapetalae</taxon>
        <taxon>rosids</taxon>
        <taxon>malvids</taxon>
        <taxon>Brassicales</taxon>
        <taxon>Brassicaceae</taxon>
        <taxon>Camelineae</taxon>
        <taxon>Arabidopsis</taxon>
    </lineage>
</organism>
<sequence>MAAATVLGRLSLIPNLSSKPKLKSNRRTTSTSVSVRAQASFSDPFVLQLAESLEDSLSASPSSSLPLQRIRDSSAETLLSTPWPSRKDEPFRFTDTSLIRSSQIEPISTQQRNSEILDNLTETQFTNAVIIDGFVSNLTIGPSDLPDGVYFGKYSGLPDELTNRISEFIGNFDSGDLFWSINGMGAPDLMVIYVPEGCKVENPIYLRYFSGETGDRESKRLPVSNPRVFVLVEEGGEIGIVEEFVGKDEEGFYWTNPVLEVVVQKNAKLKHSYLQKESMASAHIKWTFVRQEAESEYELVEVSTGGKLGRHNVHVQQLGPDTLTELTTFHMCVNEQTLDLHSKIILDHPRGASRQLHKCIVAHSSGQAVFDGNVRVNRFAQQTNAGQLTRSLLLKPRATVNIKPNLQIIADDVKCSHGAAISDLEEDQLFYFQARGIDLETARRALISSFGSEVIEKFPNREIRDQARNHVKGLL</sequence>
<feature type="transit peptide" description="Chloroplast" evidence="1">
    <location>
        <begin position="1"/>
        <end position="36"/>
    </location>
</feature>
<feature type="chain" id="PRO_0000250658" description="Protein ABCI7, chloroplastic">
    <location>
        <begin position="37"/>
        <end position="475"/>
    </location>
</feature>
<feature type="sequence conflict" description="In Ref. 3; AAM63647." evidence="3" ref="3">
    <original>G</original>
    <variation>S</variation>
    <location>
        <position position="239"/>
    </location>
</feature>
<protein>
    <recommendedName>
        <fullName>Protein ABCI7, chloroplastic</fullName>
    </recommendedName>
    <alternativeName>
        <fullName>ABC transporter I family member 7</fullName>
        <shortName>ABC transporter ABCI.7</shortName>
        <shortName>AtABCI7</shortName>
    </alternativeName>
    <alternativeName>
        <fullName>Non-intrinsic ABC protein 6</fullName>
    </alternativeName>
    <alternativeName>
        <fullName>Plastid SufD-like protein</fullName>
    </alternativeName>
</protein>
<proteinExistence type="evidence at protein level"/>
<evidence type="ECO:0000255" key="1"/>
<evidence type="ECO:0000269" key="2">
    <source>
    </source>
</evidence>
<evidence type="ECO:0000305" key="3"/>
<evidence type="ECO:0000305" key="4">
    <source>
    </source>
</evidence>
<gene>
    <name type="primary">ABCI7</name>
    <name type="synonym">NAP6</name>
    <name type="ordered locus">At1g32500</name>
    <name type="ORF">F5D14.28</name>
</gene>